<comment type="function">
    <text evidence="1">Involved in the synthesis of meso-diaminopimelate (m-DAP or DL-DAP), required for both lysine and peptidoglycan biosynthesis. Catalyzes the direct conversion of tetrahydrodipicolinate to LL-diaminopimelate.</text>
</comment>
<comment type="catalytic activity">
    <reaction evidence="1">
        <text>(2S,6S)-2,6-diaminopimelate + 2-oxoglutarate = (S)-2,3,4,5-tetrahydrodipicolinate + L-glutamate + H2O + H(+)</text>
        <dbReference type="Rhea" id="RHEA:23988"/>
        <dbReference type="ChEBI" id="CHEBI:15377"/>
        <dbReference type="ChEBI" id="CHEBI:15378"/>
        <dbReference type="ChEBI" id="CHEBI:16810"/>
        <dbReference type="ChEBI" id="CHEBI:16845"/>
        <dbReference type="ChEBI" id="CHEBI:29985"/>
        <dbReference type="ChEBI" id="CHEBI:57609"/>
        <dbReference type="EC" id="2.6.1.83"/>
    </reaction>
</comment>
<comment type="cofactor">
    <cofactor evidence="1">
        <name>pyridoxal 5'-phosphate</name>
        <dbReference type="ChEBI" id="CHEBI:597326"/>
    </cofactor>
</comment>
<comment type="pathway">
    <text evidence="1">Amino-acid biosynthesis; L-lysine biosynthesis via DAP pathway; LL-2,6-diaminopimelate from (S)-tetrahydrodipicolinate (aminotransferase route): step 1/1.</text>
</comment>
<comment type="subunit">
    <text evidence="1">Homodimer.</text>
</comment>
<comment type="similarity">
    <text evidence="1">Belongs to the class-I pyridoxal-phosphate-dependent aminotransferase family. LL-diaminopimelate aminotransferase subfamily.</text>
</comment>
<name>DAPAT_DESOH</name>
<accession>A8ZXV5</accession>
<keyword id="KW-0032">Aminotransferase</keyword>
<keyword id="KW-0663">Pyridoxal phosphate</keyword>
<keyword id="KW-1185">Reference proteome</keyword>
<keyword id="KW-0808">Transferase</keyword>
<feature type="chain" id="PRO_1000186865" description="LL-diaminopimelate aminotransferase">
    <location>
        <begin position="1"/>
        <end position="409"/>
    </location>
</feature>
<feature type="binding site" evidence="1">
    <location>
        <position position="15"/>
    </location>
    <ligand>
        <name>substrate</name>
    </ligand>
</feature>
<feature type="binding site" evidence="1">
    <location>
        <position position="42"/>
    </location>
    <ligand>
        <name>substrate</name>
    </ligand>
</feature>
<feature type="binding site" evidence="1">
    <location>
        <position position="72"/>
    </location>
    <ligand>
        <name>pyridoxal 5'-phosphate</name>
        <dbReference type="ChEBI" id="CHEBI:597326"/>
    </ligand>
</feature>
<feature type="binding site" evidence="1">
    <location>
        <begin position="108"/>
        <end position="109"/>
    </location>
    <ligand>
        <name>pyridoxal 5'-phosphate</name>
        <dbReference type="ChEBI" id="CHEBI:597326"/>
    </ligand>
</feature>
<feature type="binding site" evidence="1">
    <location>
        <position position="109"/>
    </location>
    <ligand>
        <name>substrate</name>
    </ligand>
</feature>
<feature type="binding site" evidence="1">
    <location>
        <position position="132"/>
    </location>
    <ligand>
        <name>pyridoxal 5'-phosphate</name>
        <dbReference type="ChEBI" id="CHEBI:597326"/>
    </ligand>
</feature>
<feature type="binding site" evidence="1">
    <location>
        <position position="132"/>
    </location>
    <ligand>
        <name>substrate</name>
    </ligand>
</feature>
<feature type="binding site" evidence="1">
    <location>
        <position position="186"/>
    </location>
    <ligand>
        <name>pyridoxal 5'-phosphate</name>
        <dbReference type="ChEBI" id="CHEBI:597326"/>
    </ligand>
</feature>
<feature type="binding site" evidence="1">
    <location>
        <position position="186"/>
    </location>
    <ligand>
        <name>substrate</name>
    </ligand>
</feature>
<feature type="binding site" evidence="1">
    <location>
        <position position="217"/>
    </location>
    <ligand>
        <name>pyridoxal 5'-phosphate</name>
        <dbReference type="ChEBI" id="CHEBI:597326"/>
    </ligand>
</feature>
<feature type="binding site" evidence="1">
    <location>
        <begin position="245"/>
        <end position="247"/>
    </location>
    <ligand>
        <name>pyridoxal 5'-phosphate</name>
        <dbReference type="ChEBI" id="CHEBI:597326"/>
    </ligand>
</feature>
<feature type="binding site" evidence="1">
    <location>
        <position position="256"/>
    </location>
    <ligand>
        <name>pyridoxal 5'-phosphate</name>
        <dbReference type="ChEBI" id="CHEBI:597326"/>
    </ligand>
</feature>
<feature type="binding site" evidence="1">
    <location>
        <position position="291"/>
    </location>
    <ligand>
        <name>pyridoxal 5'-phosphate</name>
        <dbReference type="ChEBI" id="CHEBI:597326"/>
    </ligand>
</feature>
<feature type="binding site" evidence="1">
    <location>
        <position position="291"/>
    </location>
    <ligand>
        <name>substrate</name>
    </ligand>
</feature>
<feature type="binding site" evidence="1">
    <location>
        <position position="385"/>
    </location>
    <ligand>
        <name>substrate</name>
    </ligand>
</feature>
<feature type="modified residue" description="N6-(pyridoxal phosphate)lysine" evidence="1">
    <location>
        <position position="248"/>
    </location>
</feature>
<organism>
    <name type="scientific">Desulfosudis oleivorans (strain DSM 6200 / JCM 39069 / Hxd3)</name>
    <name type="common">Desulfococcus oleovorans</name>
    <dbReference type="NCBI Taxonomy" id="96561"/>
    <lineage>
        <taxon>Bacteria</taxon>
        <taxon>Pseudomonadati</taxon>
        <taxon>Thermodesulfobacteriota</taxon>
        <taxon>Desulfobacteria</taxon>
        <taxon>Desulfobacterales</taxon>
        <taxon>Desulfosudaceae</taxon>
        <taxon>Desulfosudis</taxon>
    </lineage>
</organism>
<dbReference type="EC" id="2.6.1.83" evidence="1"/>
<dbReference type="EMBL" id="CP000859">
    <property type="protein sequence ID" value="ABW68582.1"/>
    <property type="molecule type" value="Genomic_DNA"/>
</dbReference>
<dbReference type="RefSeq" id="WP_012176193.1">
    <property type="nucleotide sequence ID" value="NC_009943.1"/>
</dbReference>
<dbReference type="SMR" id="A8ZXV5"/>
<dbReference type="STRING" id="96561.Dole_2779"/>
<dbReference type="KEGG" id="dol:Dole_2779"/>
<dbReference type="eggNOG" id="COG0436">
    <property type="taxonomic scope" value="Bacteria"/>
</dbReference>
<dbReference type="HOGENOM" id="CLU_051433_0_0_7"/>
<dbReference type="OrthoDB" id="9804474at2"/>
<dbReference type="UniPathway" id="UPA00034">
    <property type="reaction ID" value="UER00466"/>
</dbReference>
<dbReference type="Proteomes" id="UP000008561">
    <property type="component" value="Chromosome"/>
</dbReference>
<dbReference type="GO" id="GO:0010285">
    <property type="term" value="F:L,L-diaminopimelate aminotransferase activity"/>
    <property type="evidence" value="ECO:0007669"/>
    <property type="project" value="UniProtKB-EC"/>
</dbReference>
<dbReference type="GO" id="GO:0030170">
    <property type="term" value="F:pyridoxal phosphate binding"/>
    <property type="evidence" value="ECO:0007669"/>
    <property type="project" value="InterPro"/>
</dbReference>
<dbReference type="GO" id="GO:0009089">
    <property type="term" value="P:lysine biosynthetic process via diaminopimelate"/>
    <property type="evidence" value="ECO:0007669"/>
    <property type="project" value="UniProtKB-UniPathway"/>
</dbReference>
<dbReference type="CDD" id="cd00609">
    <property type="entry name" value="AAT_like"/>
    <property type="match status" value="1"/>
</dbReference>
<dbReference type="FunFam" id="3.40.640.10:FF:000099">
    <property type="entry name" value="LL-diaminopimelate aminotransferase, chloroplastic"/>
    <property type="match status" value="1"/>
</dbReference>
<dbReference type="Gene3D" id="3.90.1150.10">
    <property type="entry name" value="Aspartate Aminotransferase, domain 1"/>
    <property type="match status" value="1"/>
</dbReference>
<dbReference type="Gene3D" id="3.40.640.10">
    <property type="entry name" value="Type I PLP-dependent aspartate aminotransferase-like (Major domain)"/>
    <property type="match status" value="1"/>
</dbReference>
<dbReference type="HAMAP" id="MF_01642">
    <property type="entry name" value="DapL_aminotrans_1"/>
    <property type="match status" value="1"/>
</dbReference>
<dbReference type="InterPro" id="IPR004839">
    <property type="entry name" value="Aminotransferase_I/II_large"/>
</dbReference>
<dbReference type="InterPro" id="IPR019942">
    <property type="entry name" value="DapL/ALD1"/>
</dbReference>
<dbReference type="InterPro" id="IPR015424">
    <property type="entry name" value="PyrdxlP-dep_Trfase"/>
</dbReference>
<dbReference type="InterPro" id="IPR015421">
    <property type="entry name" value="PyrdxlP-dep_Trfase_major"/>
</dbReference>
<dbReference type="InterPro" id="IPR015422">
    <property type="entry name" value="PyrdxlP-dep_Trfase_small"/>
</dbReference>
<dbReference type="NCBIfam" id="TIGR03542">
    <property type="entry name" value="DAPAT_plant"/>
    <property type="match status" value="1"/>
</dbReference>
<dbReference type="PANTHER" id="PTHR43144">
    <property type="entry name" value="AMINOTRANSFERASE"/>
    <property type="match status" value="1"/>
</dbReference>
<dbReference type="Pfam" id="PF00155">
    <property type="entry name" value="Aminotran_1_2"/>
    <property type="match status" value="1"/>
</dbReference>
<dbReference type="SUPFAM" id="SSF53383">
    <property type="entry name" value="PLP-dependent transferases"/>
    <property type="match status" value="1"/>
</dbReference>
<protein>
    <recommendedName>
        <fullName evidence="1">LL-diaminopimelate aminotransferase</fullName>
        <shortName evidence="1">DAP-AT</shortName>
        <shortName evidence="1">DAP-aminotransferase</shortName>
        <shortName evidence="1">LL-DAP-aminotransferase</shortName>
        <ecNumber evidence="1">2.6.1.83</ecNumber>
    </recommendedName>
</protein>
<proteinExistence type="inferred from homology"/>
<evidence type="ECO:0000255" key="1">
    <source>
        <dbReference type="HAMAP-Rule" id="MF_01642"/>
    </source>
</evidence>
<gene>
    <name evidence="1" type="primary">dapL</name>
    <name type="ordered locus">Dole_2779</name>
</gene>
<reference key="1">
    <citation type="submission" date="2007-10" db="EMBL/GenBank/DDBJ databases">
        <title>Complete sequence of Desulfococcus oleovorans Hxd3.</title>
        <authorList>
            <consortium name="US DOE Joint Genome Institute"/>
            <person name="Copeland A."/>
            <person name="Lucas S."/>
            <person name="Lapidus A."/>
            <person name="Barry K."/>
            <person name="Glavina del Rio T."/>
            <person name="Dalin E."/>
            <person name="Tice H."/>
            <person name="Pitluck S."/>
            <person name="Kiss H."/>
            <person name="Brettin T."/>
            <person name="Bruce D."/>
            <person name="Detter J.C."/>
            <person name="Han C."/>
            <person name="Schmutz J."/>
            <person name="Larimer F."/>
            <person name="Land M."/>
            <person name="Hauser L."/>
            <person name="Kyrpides N."/>
            <person name="Kim E."/>
            <person name="Wawrik B."/>
            <person name="Richardson P."/>
        </authorList>
    </citation>
    <scope>NUCLEOTIDE SEQUENCE [LARGE SCALE GENOMIC DNA]</scope>
    <source>
        <strain>DSM 6200 / JCM 39069 / Hxd3</strain>
    </source>
</reference>
<sequence>MIKINEHFLKLQSSYLFSEIAKRVNAHQATHPDQSIIKLGIGDATQPLCPACLDAFHKAVDEMGTASSFRGYGPEQGYAFLREAVAANDYQARGADIQPDEVFISDGAKCDTGNFQELFATDIRVAIPDPVYPVYLDTNVMAGRTGAFENGRYGNIVYMECTAQNSFLPAIPKEPADLVYLCFPNNPTGAVATKEYLQAWVDWALDAKALILFDAAYEAFIRDPSIPKTIYEIPGARKVAVEFRSFSKTAGFTGTRCAFSVVPKECMAYDTSGKAHALHALWNRRHCTKFNGVSYPVQRAAEAVYSPEGKAQAKEMIRTYMANADRITAAMAGMGFSYVGGDHSPYIWVDTKTDSWAFFDTLLTKAGVVCTPGGGFGKCGAQYIRLSAFNSYANVDAAMKRMAEVFGKA</sequence>